<organism>
    <name type="scientific">Homo sapiens</name>
    <name type="common">Human</name>
    <dbReference type="NCBI Taxonomy" id="9606"/>
    <lineage>
        <taxon>Eukaryota</taxon>
        <taxon>Metazoa</taxon>
        <taxon>Chordata</taxon>
        <taxon>Craniata</taxon>
        <taxon>Vertebrata</taxon>
        <taxon>Euteleostomi</taxon>
        <taxon>Mammalia</taxon>
        <taxon>Eutheria</taxon>
        <taxon>Euarchontoglires</taxon>
        <taxon>Primates</taxon>
        <taxon>Haplorrhini</taxon>
        <taxon>Catarrhini</taxon>
        <taxon>Hominidae</taxon>
        <taxon>Homo</taxon>
    </lineage>
</organism>
<comment type="function">
    <text evidence="1 2 5 6 7">Exhibits glutathione-dependent thiol transferase and dehydroascorbate reductase activities. Has S-(phenacyl)glutathione reductase activity. Also has glutathione S-transferase activity. Participates in the biotransformation of inorganic arsenic and reduces monomethylarsonic acid (MMA) and dimethylarsonic acid.</text>
</comment>
<comment type="catalytic activity">
    <reaction evidence="1 2 5 6 7">
        <text>RX + glutathione = an S-substituted glutathione + a halide anion + H(+)</text>
        <dbReference type="Rhea" id="RHEA:16437"/>
        <dbReference type="ChEBI" id="CHEBI:15378"/>
        <dbReference type="ChEBI" id="CHEBI:16042"/>
        <dbReference type="ChEBI" id="CHEBI:17792"/>
        <dbReference type="ChEBI" id="CHEBI:57925"/>
        <dbReference type="ChEBI" id="CHEBI:90779"/>
        <dbReference type="EC" id="2.5.1.18"/>
    </reaction>
</comment>
<comment type="catalytic activity">
    <reaction evidence="1 2">
        <text>L-dehydroascorbate + 2 glutathione = glutathione disulfide + L-ascorbate</text>
        <dbReference type="Rhea" id="RHEA:24424"/>
        <dbReference type="ChEBI" id="CHEBI:38290"/>
        <dbReference type="ChEBI" id="CHEBI:57925"/>
        <dbReference type="ChEBI" id="CHEBI:58297"/>
        <dbReference type="ChEBI" id="CHEBI:58539"/>
        <dbReference type="EC" id="1.8.5.1"/>
    </reaction>
</comment>
<comment type="catalytic activity">
    <reaction evidence="2">
        <text>methylarsonate + 2 glutathione + H(+) = methylarsonous acid + glutathione disulfide + H2O</text>
        <dbReference type="Rhea" id="RHEA:15969"/>
        <dbReference type="ChEBI" id="CHEBI:15377"/>
        <dbReference type="ChEBI" id="CHEBI:15378"/>
        <dbReference type="ChEBI" id="CHEBI:17826"/>
        <dbReference type="ChEBI" id="CHEBI:33409"/>
        <dbReference type="ChEBI" id="CHEBI:57925"/>
        <dbReference type="ChEBI" id="CHEBI:58297"/>
        <dbReference type="EC" id="1.20.4.2"/>
    </reaction>
</comment>
<comment type="activity regulation">
    <text>Monomethylarsonic acid reductase activity is competitively inhibited by 1-chloro 2,4-dinitrobenzene (CDNB) and by deoxycholate.</text>
</comment>
<comment type="biophysicochemical properties">
    <phDependence>
        <text evidence="2 5">Optimum pH is 8.</text>
    </phDependence>
</comment>
<comment type="subunit">
    <text evidence="1 7">Homodimer.</text>
</comment>
<comment type="interaction">
    <interactant intactId="EBI-712083">
        <id>P78417</id>
    </interactant>
    <interactant intactId="EBI-352682">
        <id>P04792</id>
        <label>HSPB1</label>
    </interactant>
    <organismsDiffer>false</organismsDiffer>
    <experiments>2</experiments>
</comment>
<comment type="subcellular location">
    <subcellularLocation>
        <location evidence="2">Cytoplasm</location>
        <location evidence="2">Cytosol</location>
    </subcellularLocation>
</comment>
<comment type="alternative products">
    <event type="alternative splicing"/>
    <isoform>
        <id>P78417-1</id>
        <name>1</name>
        <sequence type="displayed"/>
    </isoform>
    <isoform>
        <id>P78417-2</id>
        <name>2</name>
        <sequence type="described" ref="VSP_045820"/>
    </isoform>
    <isoform>
        <id>P78417-3</id>
        <name>3</name>
        <sequence type="described" ref="VSP_045819"/>
    </isoform>
</comment>
<comment type="tissue specificity">
    <text evidence="1">Ubiquitous. Highest expression in liver, pancreas, skeletal muscle, spleen, thymus, colon, blood leukocyte and heart. Lowest expression in brain, placenta and lung.</text>
</comment>
<comment type="similarity">
    <text evidence="8">Belongs to the GST superfamily. Omega family.</text>
</comment>
<comment type="sequence caution" evidence="8">
    <conflict type="erroneous initiation">
        <sequence resource="EMBL-CDS" id="CAD97673"/>
    </conflict>
    <text>Extended N-terminus.</text>
</comment>
<keyword id="KW-0002">3D-structure</keyword>
<keyword id="KW-0007">Acetylation</keyword>
<keyword id="KW-0025">Alternative splicing</keyword>
<keyword id="KW-0963">Cytoplasm</keyword>
<keyword id="KW-0903">Direct protein sequencing</keyword>
<keyword id="KW-0560">Oxidoreductase</keyword>
<keyword id="KW-0597">Phosphoprotein</keyword>
<keyword id="KW-1267">Proteomics identification</keyword>
<keyword id="KW-1185">Reference proteome</keyword>
<keyword id="KW-0808">Transferase</keyword>
<gene>
    <name type="primary">GSTO1</name>
    <name type="synonym">GSTTLP28</name>
</gene>
<feature type="initiator methionine" description="Removed" evidence="9">
    <location>
        <position position="1"/>
    </location>
</feature>
<feature type="chain" id="PRO_0000185884" description="Glutathione S-transferase omega-1">
    <location>
        <begin position="2"/>
        <end position="241"/>
    </location>
</feature>
<feature type="domain" description="GST N-terminal">
    <location>
        <begin position="22"/>
        <end position="101"/>
    </location>
</feature>
<feature type="domain" description="GST C-terminal">
    <location>
        <begin position="106"/>
        <end position="230"/>
    </location>
</feature>
<feature type="active site" description="Nucleophile" evidence="1">
    <location>
        <position position="32"/>
    </location>
</feature>
<feature type="binding site" evidence="1 7">
    <location>
        <position position="59"/>
    </location>
    <ligand>
        <name>glutathione</name>
        <dbReference type="ChEBI" id="CHEBI:57925"/>
    </ligand>
</feature>
<feature type="binding site" evidence="1 7">
    <location>
        <position position="72"/>
    </location>
    <ligand>
        <name>glutathione</name>
        <dbReference type="ChEBI" id="CHEBI:57925"/>
    </ligand>
</feature>
<feature type="binding site" evidence="1 7">
    <location>
        <begin position="85"/>
        <end position="86"/>
    </location>
    <ligand>
        <name>glutathione</name>
        <dbReference type="ChEBI" id="CHEBI:57925"/>
    </ligand>
</feature>
<feature type="modified residue" description="N-acetylserine" evidence="9">
    <location>
        <position position="2"/>
    </location>
</feature>
<feature type="modified residue" description="N6-acetyllysine" evidence="10">
    <location>
        <position position="57"/>
    </location>
</feature>
<feature type="modified residue" description="Phosphoserine" evidence="11">
    <location>
        <position position="129"/>
    </location>
</feature>
<feature type="modified residue" description="N6-acetyllysine" evidence="10">
    <location>
        <position position="143"/>
    </location>
</feature>
<feature type="modified residue" description="N6-acetyllysine" evidence="10">
    <location>
        <position position="148"/>
    </location>
</feature>
<feature type="modified residue" description="N6-acetyllysine" evidence="10">
    <location>
        <position position="152"/>
    </location>
</feature>
<feature type="splice variant" id="VSP_045819" description="In isoform 3." evidence="8">
    <location>
        <begin position="1"/>
        <end position="28"/>
    </location>
</feature>
<feature type="splice variant" id="VSP_045820" description="In isoform 2." evidence="8">
    <location>
        <begin position="123"/>
        <end position="155"/>
    </location>
</feature>
<feature type="sequence variant" id="VAR_061231" description="In dbSNP:rs45529437.">
    <original>C</original>
    <variation>Y</variation>
    <location>
        <position position="32"/>
    </location>
</feature>
<feature type="sequence variant" id="VAR_029269" description="In dbSNP:rs11509436.">
    <original>S</original>
    <variation>C</variation>
    <location>
        <position position="86"/>
    </location>
</feature>
<feature type="sequence variant" id="VAR_016811" description="In allele GSTO1*C; no effect on protein stability; dbSNP:rs4925." evidence="3 4 7">
    <original>A</original>
    <variation>D</variation>
    <location>
        <position position="140"/>
    </location>
</feature>
<feature type="sequence variant" id="VAR_016813" description="In allele GSTO1*B; decreased protein stability." evidence="3 4 7">
    <location>
        <position position="155"/>
    </location>
</feature>
<feature type="sequence variant" id="VAR_024484" description="In dbSNP:rs11509438." evidence="4">
    <original>E</original>
    <variation>K</variation>
    <location>
        <position position="208"/>
    </location>
</feature>
<feature type="sequence variant" id="VAR_026583" description="In dbSNP:rs11509439." evidence="4">
    <original>A</original>
    <variation>V</variation>
    <location>
        <position position="236"/>
    </location>
</feature>
<feature type="mutagenesis site" description="Loss of activity." evidence="5">
    <original>C</original>
    <variation>A</variation>
    <location>
        <position position="32"/>
    </location>
</feature>
<feature type="helix" evidence="13">
    <location>
        <begin position="4"/>
        <end position="6"/>
    </location>
</feature>
<feature type="strand" evidence="15">
    <location>
        <begin position="24"/>
        <end position="28"/>
    </location>
</feature>
<feature type="helix" evidence="15">
    <location>
        <begin position="33"/>
        <end position="44"/>
    </location>
</feature>
<feature type="strand" evidence="15">
    <location>
        <begin position="49"/>
        <end position="54"/>
    </location>
</feature>
<feature type="strand" evidence="12">
    <location>
        <begin position="56"/>
        <end position="58"/>
    </location>
</feature>
<feature type="helix" evidence="15">
    <location>
        <begin position="61"/>
        <end position="65"/>
    </location>
</feature>
<feature type="strand" evidence="15">
    <location>
        <begin position="74"/>
        <end position="76"/>
    </location>
</feature>
<feature type="strand" evidence="15">
    <location>
        <begin position="82"/>
        <end position="85"/>
    </location>
</feature>
<feature type="helix" evidence="15">
    <location>
        <begin position="86"/>
        <end position="96"/>
    </location>
</feature>
<feature type="helix" evidence="15">
    <location>
        <begin position="107"/>
        <end position="120"/>
    </location>
</feature>
<feature type="helix" evidence="15">
    <location>
        <begin position="123"/>
        <end position="129"/>
    </location>
</feature>
<feature type="turn" evidence="15">
    <location>
        <begin position="130"/>
        <end position="132"/>
    </location>
</feature>
<feature type="helix" evidence="15">
    <location>
        <begin position="136"/>
        <end position="160"/>
    </location>
</feature>
<feature type="strand" evidence="14">
    <location>
        <begin position="162"/>
        <end position="164"/>
    </location>
</feature>
<feature type="strand" evidence="15">
    <location>
        <begin position="167"/>
        <end position="169"/>
    </location>
</feature>
<feature type="helix" evidence="15">
    <location>
        <begin position="172"/>
        <end position="182"/>
    </location>
</feature>
<feature type="helix" evidence="15">
    <location>
        <begin position="184"/>
        <end position="187"/>
    </location>
</feature>
<feature type="helix" evidence="15">
    <location>
        <begin position="190"/>
        <end position="193"/>
    </location>
</feature>
<feature type="helix" evidence="15">
    <location>
        <begin position="197"/>
        <end position="207"/>
    </location>
</feature>
<feature type="helix" evidence="15">
    <location>
        <begin position="210"/>
        <end position="215"/>
    </location>
</feature>
<feature type="helix" evidence="15">
    <location>
        <begin position="219"/>
        <end position="229"/>
    </location>
</feature>
<feature type="turn" evidence="15">
    <location>
        <begin position="230"/>
        <end position="232"/>
    </location>
</feature>
<feature type="helix" evidence="15">
    <location>
        <begin position="236"/>
        <end position="238"/>
    </location>
</feature>
<dbReference type="EC" id="2.5.1.18" evidence="1 2 5 6 7"/>
<dbReference type="EC" id="1.8.5.1" evidence="1 2"/>
<dbReference type="EC" id="1.20.4.2" evidence="2"/>
<dbReference type="EMBL" id="U90313">
    <property type="protein sequence ID" value="AAB70109.1"/>
    <property type="molecule type" value="mRNA"/>
</dbReference>
<dbReference type="EMBL" id="AF212303">
    <property type="protein sequence ID" value="AAF73376.1"/>
    <property type="molecule type" value="mRNA"/>
</dbReference>
<dbReference type="EMBL" id="AY817669">
    <property type="protein sequence ID" value="AAV68046.1"/>
    <property type="molecule type" value="Genomic_DNA"/>
</dbReference>
<dbReference type="EMBL" id="BX537431">
    <property type="protein sequence ID" value="CAD97673.1"/>
    <property type="status" value="ALT_INIT"/>
    <property type="molecule type" value="mRNA"/>
</dbReference>
<dbReference type="EMBL" id="AL139341">
    <property type="status" value="NOT_ANNOTATED_CDS"/>
    <property type="molecule type" value="Genomic_DNA"/>
</dbReference>
<dbReference type="EMBL" id="CH471066">
    <property type="protein sequence ID" value="EAW49601.1"/>
    <property type="molecule type" value="Genomic_DNA"/>
</dbReference>
<dbReference type="EMBL" id="CH471066">
    <property type="protein sequence ID" value="EAW49602.1"/>
    <property type="molecule type" value="Genomic_DNA"/>
</dbReference>
<dbReference type="EMBL" id="CH471066">
    <property type="protein sequence ID" value="EAW49603.1"/>
    <property type="molecule type" value="Genomic_DNA"/>
</dbReference>
<dbReference type="EMBL" id="BC000127">
    <property type="protein sequence ID" value="AAH00127.1"/>
    <property type="molecule type" value="mRNA"/>
</dbReference>
<dbReference type="CCDS" id="CCDS53572.1">
    <molecule id="P78417-2"/>
</dbReference>
<dbReference type="CCDS" id="CCDS53573.1">
    <molecule id="P78417-3"/>
</dbReference>
<dbReference type="CCDS" id="CCDS7555.1">
    <molecule id="P78417-1"/>
</dbReference>
<dbReference type="RefSeq" id="NP_001177931.1">
    <molecule id="P78417-2"/>
    <property type="nucleotide sequence ID" value="NM_001191002.2"/>
</dbReference>
<dbReference type="RefSeq" id="NP_001177932.1">
    <molecule id="P78417-3"/>
    <property type="nucleotide sequence ID" value="NM_001191003.2"/>
</dbReference>
<dbReference type="RefSeq" id="NP_004823.1">
    <molecule id="P78417-1"/>
    <property type="nucleotide sequence ID" value="NM_004832.3"/>
</dbReference>
<dbReference type="PDB" id="1EEM">
    <property type="method" value="X-ray"/>
    <property type="resolution" value="2.00 A"/>
    <property type="chains" value="A=1-241"/>
</dbReference>
<dbReference type="PDB" id="3LFL">
    <property type="method" value="X-ray"/>
    <property type="resolution" value="2.10 A"/>
    <property type="chains" value="A/B/C=1-241"/>
</dbReference>
<dbReference type="PDB" id="3VLN">
    <property type="method" value="X-ray"/>
    <property type="resolution" value="1.70 A"/>
    <property type="chains" value="A=1-241"/>
</dbReference>
<dbReference type="PDB" id="4IS0">
    <property type="method" value="X-ray"/>
    <property type="resolution" value="1.72 A"/>
    <property type="chains" value="A=1-241"/>
</dbReference>
<dbReference type="PDB" id="4YQM">
    <property type="method" value="X-ray"/>
    <property type="resolution" value="2.38 A"/>
    <property type="chains" value="A/B/C=1-241"/>
</dbReference>
<dbReference type="PDB" id="4YQU">
    <property type="method" value="X-ray"/>
    <property type="resolution" value="1.94 A"/>
    <property type="chains" value="A/B=1-241"/>
</dbReference>
<dbReference type="PDB" id="4YQV">
    <property type="method" value="X-ray"/>
    <property type="resolution" value="2.06 A"/>
    <property type="chains" value="A/B/C=1-241"/>
</dbReference>
<dbReference type="PDB" id="5UEH">
    <property type="method" value="X-ray"/>
    <property type="resolution" value="2.00 A"/>
    <property type="chains" value="A=1-241"/>
</dbReference>
<dbReference type="PDB" id="5V3Q">
    <property type="method" value="X-ray"/>
    <property type="resolution" value="2.25 A"/>
    <property type="chains" value="A=1-241"/>
</dbReference>
<dbReference type="PDB" id="5YVN">
    <property type="method" value="X-ray"/>
    <property type="resolution" value="1.33 A"/>
    <property type="chains" value="A=1-241"/>
</dbReference>
<dbReference type="PDB" id="5YVO">
    <property type="method" value="X-ray"/>
    <property type="resolution" value="1.80 A"/>
    <property type="chains" value="A=1-241"/>
</dbReference>
<dbReference type="PDB" id="6MHB">
    <property type="method" value="X-ray"/>
    <property type="resolution" value="2.75 A"/>
    <property type="chains" value="A/B/C/D/E/F=1-241"/>
</dbReference>
<dbReference type="PDB" id="6MHC">
    <property type="method" value="X-ray"/>
    <property type="resolution" value="2.00 A"/>
    <property type="chains" value="A/B=1-241"/>
</dbReference>
<dbReference type="PDB" id="6MHD">
    <property type="method" value="X-ray"/>
    <property type="resolution" value="2.16 A"/>
    <property type="chains" value="A/B=1-241"/>
</dbReference>
<dbReference type="PDB" id="6PNM">
    <property type="method" value="X-ray"/>
    <property type="resolution" value="1.82 A"/>
    <property type="chains" value="A=2-241"/>
</dbReference>
<dbReference type="PDB" id="6PNN">
    <property type="method" value="X-ray"/>
    <property type="resolution" value="2.10 A"/>
    <property type="chains" value="A=2-241"/>
</dbReference>
<dbReference type="PDB" id="6PNO">
    <property type="method" value="X-ray"/>
    <property type="resolution" value="1.82 A"/>
    <property type="chains" value="A=2-241"/>
</dbReference>
<dbReference type="PDBsum" id="1EEM"/>
<dbReference type="PDBsum" id="3LFL"/>
<dbReference type="PDBsum" id="3VLN"/>
<dbReference type="PDBsum" id="4IS0"/>
<dbReference type="PDBsum" id="4YQM"/>
<dbReference type="PDBsum" id="4YQU"/>
<dbReference type="PDBsum" id="4YQV"/>
<dbReference type="PDBsum" id="5UEH"/>
<dbReference type="PDBsum" id="5V3Q"/>
<dbReference type="PDBsum" id="5YVN"/>
<dbReference type="PDBsum" id="5YVO"/>
<dbReference type="PDBsum" id="6MHB"/>
<dbReference type="PDBsum" id="6MHC"/>
<dbReference type="PDBsum" id="6MHD"/>
<dbReference type="PDBsum" id="6PNM"/>
<dbReference type="PDBsum" id="6PNN"/>
<dbReference type="PDBsum" id="6PNO"/>
<dbReference type="SMR" id="P78417"/>
<dbReference type="BioGRID" id="114836">
    <property type="interactions" value="122"/>
</dbReference>
<dbReference type="FunCoup" id="P78417">
    <property type="interactions" value="840"/>
</dbReference>
<dbReference type="IntAct" id="P78417">
    <property type="interactions" value="18"/>
</dbReference>
<dbReference type="MINT" id="P78417"/>
<dbReference type="STRING" id="9606.ENSP00000358727"/>
<dbReference type="BindingDB" id="P78417"/>
<dbReference type="ChEMBL" id="CHEMBL3174"/>
<dbReference type="DrugBank" id="DB14001">
    <property type="generic name" value="alpha-Tocopherol succinate"/>
</dbReference>
<dbReference type="DrugBank" id="DB14002">
    <property type="generic name" value="D-alpha-Tocopherol acetate"/>
</dbReference>
<dbReference type="DrugBank" id="DB00143">
    <property type="generic name" value="Glutathione"/>
</dbReference>
<dbReference type="DrugBank" id="DB00163">
    <property type="generic name" value="Vitamin E"/>
</dbReference>
<dbReference type="DrugCentral" id="P78417"/>
<dbReference type="GuidetoPHARMACOLOGY" id="3110"/>
<dbReference type="GlyConnect" id="2854">
    <property type="glycosylation" value="1 O-GlcNAc glycan (1 site)"/>
</dbReference>
<dbReference type="GlyCosmos" id="P78417">
    <property type="glycosylation" value="1 site, 1 glycan"/>
</dbReference>
<dbReference type="GlyGen" id="P78417">
    <property type="glycosylation" value="1 site, 1 O-linked glycan (1 site)"/>
</dbReference>
<dbReference type="iPTMnet" id="P78417"/>
<dbReference type="MetOSite" id="P78417"/>
<dbReference type="PhosphoSitePlus" id="P78417"/>
<dbReference type="SwissPalm" id="P78417"/>
<dbReference type="BioMuta" id="GSTO1"/>
<dbReference type="DMDM" id="6016173"/>
<dbReference type="OGP" id="P78417"/>
<dbReference type="CPTAC" id="CPTAC-381"/>
<dbReference type="CPTAC" id="CPTAC-382"/>
<dbReference type="jPOST" id="P78417"/>
<dbReference type="MassIVE" id="P78417"/>
<dbReference type="PaxDb" id="9606-ENSP00000358727"/>
<dbReference type="PeptideAtlas" id="P78417"/>
<dbReference type="ProteomicsDB" id="12755"/>
<dbReference type="ProteomicsDB" id="27484"/>
<dbReference type="ProteomicsDB" id="57621">
    <molecule id="P78417-1"/>
</dbReference>
<dbReference type="Pumba" id="P78417"/>
<dbReference type="TopDownProteomics" id="P78417-1">
    <molecule id="P78417-1"/>
</dbReference>
<dbReference type="Antibodypedia" id="31606">
    <property type="antibodies" value="307 antibodies from 34 providers"/>
</dbReference>
<dbReference type="DNASU" id="9446"/>
<dbReference type="Ensembl" id="ENST00000369710.8">
    <molecule id="P78417-2"/>
    <property type="protein sequence ID" value="ENSP00000358724.4"/>
    <property type="gene ID" value="ENSG00000148834.13"/>
</dbReference>
<dbReference type="Ensembl" id="ENST00000369713.10">
    <molecule id="P78417-1"/>
    <property type="protein sequence ID" value="ENSP00000358727.5"/>
    <property type="gene ID" value="ENSG00000148834.13"/>
</dbReference>
<dbReference type="Ensembl" id="ENST00000539281.5">
    <molecule id="P78417-3"/>
    <property type="protein sequence ID" value="ENSP00000441488.1"/>
    <property type="gene ID" value="ENSG00000148834.13"/>
</dbReference>
<dbReference type="GeneID" id="9446"/>
<dbReference type="KEGG" id="hsa:9446"/>
<dbReference type="MANE-Select" id="ENST00000369713.10">
    <property type="protein sequence ID" value="ENSP00000358727.5"/>
    <property type="RefSeq nucleotide sequence ID" value="NM_004832.3"/>
    <property type="RefSeq protein sequence ID" value="NP_004823.1"/>
</dbReference>
<dbReference type="UCSC" id="uc021pxr.2">
    <molecule id="P78417-1"/>
    <property type="organism name" value="human"/>
</dbReference>
<dbReference type="AGR" id="HGNC:13312"/>
<dbReference type="CTD" id="9446"/>
<dbReference type="DisGeNET" id="9446"/>
<dbReference type="GeneCards" id="GSTO1"/>
<dbReference type="HGNC" id="HGNC:13312">
    <property type="gene designation" value="GSTO1"/>
</dbReference>
<dbReference type="HPA" id="ENSG00000148834">
    <property type="expression patterns" value="Tissue enhanced (liver)"/>
</dbReference>
<dbReference type="MIM" id="605482">
    <property type="type" value="gene"/>
</dbReference>
<dbReference type="neXtProt" id="NX_P78417"/>
<dbReference type="OpenTargets" id="ENSG00000148834"/>
<dbReference type="PharmGKB" id="PA133787054"/>
<dbReference type="VEuPathDB" id="HostDB:ENSG00000148834"/>
<dbReference type="eggNOG" id="KOG0406">
    <property type="taxonomic scope" value="Eukaryota"/>
</dbReference>
<dbReference type="GeneTree" id="ENSGT00940000155351"/>
<dbReference type="InParanoid" id="P78417"/>
<dbReference type="OMA" id="ADHYSHR"/>
<dbReference type="OrthoDB" id="4951845at2759"/>
<dbReference type="PAN-GO" id="P78417">
    <property type="GO annotations" value="5 GO annotations based on evolutionary models"/>
</dbReference>
<dbReference type="PhylomeDB" id="P78417"/>
<dbReference type="TreeFam" id="TF105325"/>
<dbReference type="BioCyc" id="MetaCyc:HS07564-MONOMER"/>
<dbReference type="BRENDA" id="1.20.4.2">
    <property type="organism ID" value="2681"/>
</dbReference>
<dbReference type="BRENDA" id="1.8.5.1">
    <property type="organism ID" value="2681"/>
</dbReference>
<dbReference type="BRENDA" id="2.5.1.18">
    <property type="organism ID" value="2681"/>
</dbReference>
<dbReference type="PathwayCommons" id="P78417"/>
<dbReference type="Reactome" id="R-HSA-156581">
    <property type="pathway name" value="Methylation"/>
</dbReference>
<dbReference type="Reactome" id="R-HSA-156590">
    <property type="pathway name" value="Glutathione conjugation"/>
</dbReference>
<dbReference type="Reactome" id="R-HSA-196836">
    <property type="pathway name" value="Vitamin C (ascorbate) metabolism"/>
</dbReference>
<dbReference type="Reactome" id="R-HSA-8950505">
    <property type="pathway name" value="Gene and protein expression by JAK-STAT signaling after Interleukin-12 stimulation"/>
</dbReference>
<dbReference type="SignaLink" id="P78417"/>
<dbReference type="BioGRID-ORCS" id="9446">
    <property type="hits" value="17 hits in 1158 CRISPR screens"/>
</dbReference>
<dbReference type="CD-CODE" id="91857CE7">
    <property type="entry name" value="Nucleolus"/>
</dbReference>
<dbReference type="CD-CODE" id="FB4E32DD">
    <property type="entry name" value="Presynaptic clusters and postsynaptic densities"/>
</dbReference>
<dbReference type="ChiTaRS" id="GSTO1">
    <property type="organism name" value="human"/>
</dbReference>
<dbReference type="EvolutionaryTrace" id="P78417"/>
<dbReference type="GeneWiki" id="GSTO1"/>
<dbReference type="GenomeRNAi" id="9446"/>
<dbReference type="Pharos" id="P78417">
    <property type="development level" value="Tchem"/>
</dbReference>
<dbReference type="PRO" id="PR:P78417"/>
<dbReference type="Proteomes" id="UP000005640">
    <property type="component" value="Chromosome 10"/>
</dbReference>
<dbReference type="RNAct" id="P78417">
    <property type="molecule type" value="protein"/>
</dbReference>
<dbReference type="Bgee" id="ENSG00000148834">
    <property type="expression patterns" value="Expressed in monocyte and 206 other cell types or tissues"/>
</dbReference>
<dbReference type="ExpressionAtlas" id="P78417">
    <property type="expression patterns" value="baseline and differential"/>
</dbReference>
<dbReference type="GO" id="GO:0005737">
    <property type="term" value="C:cytoplasm"/>
    <property type="evidence" value="ECO:0000314"/>
    <property type="project" value="UniProtKB"/>
</dbReference>
<dbReference type="GO" id="GO:0005829">
    <property type="term" value="C:cytosol"/>
    <property type="evidence" value="ECO:0000304"/>
    <property type="project" value="Reactome"/>
</dbReference>
<dbReference type="GO" id="GO:0070062">
    <property type="term" value="C:extracellular exosome"/>
    <property type="evidence" value="ECO:0007005"/>
    <property type="project" value="UniProtKB"/>
</dbReference>
<dbReference type="GO" id="GO:0045174">
    <property type="term" value="F:glutathione dehydrogenase (ascorbate) activity"/>
    <property type="evidence" value="ECO:0000314"/>
    <property type="project" value="UniProtKB"/>
</dbReference>
<dbReference type="GO" id="GO:0004364">
    <property type="term" value="F:glutathione transferase activity"/>
    <property type="evidence" value="ECO:0000314"/>
    <property type="project" value="UniProtKB"/>
</dbReference>
<dbReference type="GO" id="GO:0050610">
    <property type="term" value="F:methylarsonate reductase activity"/>
    <property type="evidence" value="ECO:0007669"/>
    <property type="project" value="UniProtKB-EC"/>
</dbReference>
<dbReference type="GO" id="GO:0016491">
    <property type="term" value="F:oxidoreductase activity"/>
    <property type="evidence" value="ECO:0000314"/>
    <property type="project" value="UniProtKB"/>
</dbReference>
<dbReference type="GO" id="GO:0071243">
    <property type="term" value="P:cellular response to arsenic-containing substance"/>
    <property type="evidence" value="ECO:0000314"/>
    <property type="project" value="UniProtKB"/>
</dbReference>
<dbReference type="GO" id="GO:0006749">
    <property type="term" value="P:glutathione metabolic process"/>
    <property type="evidence" value="ECO:0000318"/>
    <property type="project" value="GO_Central"/>
</dbReference>
<dbReference type="GO" id="GO:0019852">
    <property type="term" value="P:L-ascorbic acid metabolic process"/>
    <property type="evidence" value="ECO:0000314"/>
    <property type="project" value="UniProtKB"/>
</dbReference>
<dbReference type="GO" id="GO:0051280">
    <property type="term" value="P:negative regulation of release of sequestered calcium ion into cytosol"/>
    <property type="evidence" value="ECO:0000314"/>
    <property type="project" value="BHF-UCL"/>
</dbReference>
<dbReference type="GO" id="GO:0051281">
    <property type="term" value="P:positive regulation of release of sequestered calcium ion into cytosol"/>
    <property type="evidence" value="ECO:0000314"/>
    <property type="project" value="BHF-UCL"/>
</dbReference>
<dbReference type="GO" id="GO:0014810">
    <property type="term" value="P:positive regulation of skeletal muscle contraction by regulation of release of sequestered calcium ion"/>
    <property type="evidence" value="ECO:0000314"/>
    <property type="project" value="BHF-UCL"/>
</dbReference>
<dbReference type="GO" id="GO:0010881">
    <property type="term" value="P:regulation of cardiac muscle contraction by regulation of the release of sequestered calcium ion"/>
    <property type="evidence" value="ECO:0000314"/>
    <property type="project" value="BHF-UCL"/>
</dbReference>
<dbReference type="GO" id="GO:0010880">
    <property type="term" value="P:regulation of release of sequestered calcium ion into cytosol by sarcoplasmic reticulum"/>
    <property type="evidence" value="ECO:0000314"/>
    <property type="project" value="BHF-UCL"/>
</dbReference>
<dbReference type="GO" id="GO:0042178">
    <property type="term" value="P:xenobiotic catabolic process"/>
    <property type="evidence" value="ECO:0000314"/>
    <property type="project" value="UniProtKB"/>
</dbReference>
<dbReference type="CDD" id="cd03184">
    <property type="entry name" value="GST_C_Omega"/>
    <property type="match status" value="1"/>
</dbReference>
<dbReference type="CDD" id="cd03055">
    <property type="entry name" value="GST_N_Omega"/>
    <property type="match status" value="1"/>
</dbReference>
<dbReference type="FunFam" id="1.20.1050.10:FF:000009">
    <property type="entry name" value="Glutathione S-transferase omega-1"/>
    <property type="match status" value="1"/>
</dbReference>
<dbReference type="FunFam" id="3.40.30.10:FF:000075">
    <property type="entry name" value="Glutathione S-transferase omega-1"/>
    <property type="match status" value="1"/>
</dbReference>
<dbReference type="Gene3D" id="1.20.1050.10">
    <property type="match status" value="1"/>
</dbReference>
<dbReference type="Gene3D" id="3.40.30.10">
    <property type="entry name" value="Glutaredoxin"/>
    <property type="match status" value="1"/>
</dbReference>
<dbReference type="InterPro" id="IPR010987">
    <property type="entry name" value="Glutathione-S-Trfase_C-like"/>
</dbReference>
<dbReference type="InterPro" id="IPR036282">
    <property type="entry name" value="Glutathione-S-Trfase_C_sf"/>
</dbReference>
<dbReference type="InterPro" id="IPR004045">
    <property type="entry name" value="Glutathione_S-Trfase_N"/>
</dbReference>
<dbReference type="InterPro" id="IPR004046">
    <property type="entry name" value="GST_C"/>
</dbReference>
<dbReference type="InterPro" id="IPR005442">
    <property type="entry name" value="GST_omega"/>
</dbReference>
<dbReference type="InterPro" id="IPR050983">
    <property type="entry name" value="GST_Omega/HSP26"/>
</dbReference>
<dbReference type="InterPro" id="IPR045073">
    <property type="entry name" value="Omega/Tau-like"/>
</dbReference>
<dbReference type="InterPro" id="IPR036249">
    <property type="entry name" value="Thioredoxin-like_sf"/>
</dbReference>
<dbReference type="PANTHER" id="PTHR43968">
    <property type="match status" value="1"/>
</dbReference>
<dbReference type="PANTHER" id="PTHR43968:SF5">
    <property type="entry name" value="GLUTATHIONE S-TRANSFERASE OMEGA-1"/>
    <property type="match status" value="1"/>
</dbReference>
<dbReference type="Pfam" id="PF14497">
    <property type="entry name" value="GST_C_3"/>
    <property type="match status" value="1"/>
</dbReference>
<dbReference type="Pfam" id="PF13409">
    <property type="entry name" value="GST_N_2"/>
    <property type="match status" value="1"/>
</dbReference>
<dbReference type="PRINTS" id="PR01625">
    <property type="entry name" value="GSTRNSFRASEO"/>
</dbReference>
<dbReference type="SFLD" id="SFLDG01152">
    <property type="entry name" value="Main.3:_Omega-_and_Tau-like"/>
    <property type="match status" value="1"/>
</dbReference>
<dbReference type="SFLD" id="SFLDG00358">
    <property type="entry name" value="Main_(cytGST)"/>
    <property type="match status" value="1"/>
</dbReference>
<dbReference type="SUPFAM" id="SSF47616">
    <property type="entry name" value="GST C-terminal domain-like"/>
    <property type="match status" value="1"/>
</dbReference>
<dbReference type="SUPFAM" id="SSF52833">
    <property type="entry name" value="Thioredoxin-like"/>
    <property type="match status" value="1"/>
</dbReference>
<dbReference type="PROSITE" id="PS50405">
    <property type="entry name" value="GST_CTER"/>
    <property type="match status" value="1"/>
</dbReference>
<dbReference type="PROSITE" id="PS50404">
    <property type="entry name" value="GST_NTER"/>
    <property type="match status" value="1"/>
</dbReference>
<sequence length="241" mass="27566">MSGESARSLGKGSAPPGPVPEGSIRIYSMRFCPFAERTRLVLKAKGIRHEVININLKNKPEWFFKKNPFGLVPVLENSQGQLIYESAITCEYLDEAYPGKKLLPDDPYEKACQKMILELFSKVPSLVGSFIRSQNKEDYAGLKEEFRKEFTKLEEVLTNKKTTFFGGNSISMIDYLIWPWFERLEAMKLNECVDHTPKLKLWMAAMKEDPTVSALLTSEKDWQGFLELYLQNSPEACDYGL</sequence>
<protein>
    <recommendedName>
        <fullName>Glutathione S-transferase omega-1</fullName>
        <shortName>GSTO-1</shortName>
        <ecNumber evidence="1 2 5 6 7">2.5.1.18</ecNumber>
    </recommendedName>
    <alternativeName>
        <fullName>Glutathione S-transferase omega 1-1</fullName>
        <shortName>GSTO 1-1</shortName>
    </alternativeName>
    <alternativeName>
        <fullName>Glutathione-dependent dehydroascorbate reductase</fullName>
        <ecNumber evidence="1 2">1.8.5.1</ecNumber>
    </alternativeName>
    <alternativeName>
        <fullName>Monomethylarsonic acid reductase</fullName>
        <shortName>MMA(V) reductase</shortName>
        <ecNumber evidence="2">1.20.4.2</ecNumber>
    </alternativeName>
    <alternativeName>
        <fullName>S-(Phenacyl)glutathione reductase</fullName>
        <shortName>SPG-R</shortName>
    </alternativeName>
</protein>
<reference key="1">
    <citation type="submission" date="1997-02" db="EMBL/GenBank/DDBJ databases">
        <title>Cloning of the human homolog to a mouse protein, differentially expressed in lymphoma cells with different susceptibility to radiation induced apoptosis.</title>
        <authorList>
            <person name="Kodym R."/>
            <person name="Story M.D."/>
        </authorList>
    </citation>
    <scope>NUCLEOTIDE SEQUENCE [MRNA] (ISOFORM 1)</scope>
    <source>
        <tissue>Placenta</tissue>
    </source>
</reference>
<reference key="2">
    <citation type="journal article" date="2000" name="J. Biol. Chem.">
        <title>Identification, characterization, and crystal structure of the Omega class glutathione transferases.</title>
        <authorList>
            <person name="Board P.G."/>
            <person name="Coggan M."/>
            <person name="Chelvanayagam G."/>
            <person name="Easteal S."/>
            <person name="Jermiin L.S."/>
            <person name="Schulte G.K."/>
            <person name="Danley D.E."/>
            <person name="Hoth L.R."/>
            <person name="Griffor M.C."/>
            <person name="Kamath A.V."/>
            <person name="Rosner M.H."/>
            <person name="Chrunyk B.A."/>
            <person name="Perregaux D.E."/>
            <person name="Gabel C.A."/>
            <person name="Geoghegan K.F."/>
            <person name="Pandit J."/>
        </authorList>
    </citation>
    <scope>NUCLEOTIDE SEQUENCE [MRNA] (ISOFORM 1)</scope>
    <scope>X-RAY CRYSTALLOGRAPHY (2.0 ANGSTROMS) IN COMPLEX WITH GLUTATHIONE</scope>
    <scope>FUNCTION</scope>
    <scope>CATALYTIC ACTIVITY</scope>
    <scope>ACTIVE SITE</scope>
    <scope>SUBUNIT</scope>
    <scope>TISSUE SPECIFICITY</scope>
    <source>
        <tissue>Fetus</tissue>
    </source>
</reference>
<reference key="3">
    <citation type="journal article" date="2003" name="Environ. Health Perspect.">
        <title>Genetic variation in genes associated with arsenic metabolism: glutathione S-transferase omega 1-1 and purine nucleoside phosphorylase polymorphisms in European and indigenous Americans.</title>
        <authorList>
            <person name="Yu L."/>
            <person name="Kalla K."/>
            <person name="Guthrie E."/>
            <person name="Vidrine A."/>
            <person name="Klimecki W.T."/>
        </authorList>
    </citation>
    <scope>NUCLEOTIDE SEQUENCE [GENOMIC DNA]</scope>
    <scope>VARIANTS ASP-140; GLU-155 DEL; LYS-208 AND VAL-236</scope>
</reference>
<reference key="4">
    <citation type="journal article" date="2007" name="BMC Genomics">
        <title>The full-ORF clone resource of the German cDNA consortium.</title>
        <authorList>
            <person name="Bechtel S."/>
            <person name="Rosenfelder H."/>
            <person name="Duda A."/>
            <person name="Schmidt C.P."/>
            <person name="Ernst U."/>
            <person name="Wellenreuther R."/>
            <person name="Mehrle A."/>
            <person name="Schuster C."/>
            <person name="Bahr A."/>
            <person name="Bloecker H."/>
            <person name="Heubner D."/>
            <person name="Hoerlein A."/>
            <person name="Michel G."/>
            <person name="Wedler H."/>
            <person name="Koehrer K."/>
            <person name="Ottenwaelder B."/>
            <person name="Poustka A."/>
            <person name="Wiemann S."/>
            <person name="Schupp I."/>
        </authorList>
    </citation>
    <scope>NUCLEOTIDE SEQUENCE [LARGE SCALE MRNA] (ISOFORM 1)</scope>
    <source>
        <tissue>Uterus</tissue>
    </source>
</reference>
<reference key="5">
    <citation type="journal article" date="2004" name="Nature">
        <title>The DNA sequence and comparative analysis of human chromosome 10.</title>
        <authorList>
            <person name="Deloukas P."/>
            <person name="Earthrowl M.E."/>
            <person name="Grafham D.V."/>
            <person name="Rubenfield M."/>
            <person name="French L."/>
            <person name="Steward C.A."/>
            <person name="Sims S.K."/>
            <person name="Jones M.C."/>
            <person name="Searle S."/>
            <person name="Scott C."/>
            <person name="Howe K."/>
            <person name="Hunt S.E."/>
            <person name="Andrews T.D."/>
            <person name="Gilbert J.G.R."/>
            <person name="Swarbreck D."/>
            <person name="Ashurst J.L."/>
            <person name="Taylor A."/>
            <person name="Battles J."/>
            <person name="Bird C.P."/>
            <person name="Ainscough R."/>
            <person name="Almeida J.P."/>
            <person name="Ashwell R.I.S."/>
            <person name="Ambrose K.D."/>
            <person name="Babbage A.K."/>
            <person name="Bagguley C.L."/>
            <person name="Bailey J."/>
            <person name="Banerjee R."/>
            <person name="Bates K."/>
            <person name="Beasley H."/>
            <person name="Bray-Allen S."/>
            <person name="Brown A.J."/>
            <person name="Brown J.Y."/>
            <person name="Burford D.C."/>
            <person name="Burrill W."/>
            <person name="Burton J."/>
            <person name="Cahill P."/>
            <person name="Camire D."/>
            <person name="Carter N.P."/>
            <person name="Chapman J.C."/>
            <person name="Clark S.Y."/>
            <person name="Clarke G."/>
            <person name="Clee C.M."/>
            <person name="Clegg S."/>
            <person name="Corby N."/>
            <person name="Coulson A."/>
            <person name="Dhami P."/>
            <person name="Dutta I."/>
            <person name="Dunn M."/>
            <person name="Faulkner L."/>
            <person name="Frankish A."/>
            <person name="Frankland J.A."/>
            <person name="Garner P."/>
            <person name="Garnett J."/>
            <person name="Gribble S."/>
            <person name="Griffiths C."/>
            <person name="Grocock R."/>
            <person name="Gustafson E."/>
            <person name="Hammond S."/>
            <person name="Harley J.L."/>
            <person name="Hart E."/>
            <person name="Heath P.D."/>
            <person name="Ho T.P."/>
            <person name="Hopkins B."/>
            <person name="Horne J."/>
            <person name="Howden P.J."/>
            <person name="Huckle E."/>
            <person name="Hynds C."/>
            <person name="Johnson C."/>
            <person name="Johnson D."/>
            <person name="Kana A."/>
            <person name="Kay M."/>
            <person name="Kimberley A.M."/>
            <person name="Kershaw J.K."/>
            <person name="Kokkinaki M."/>
            <person name="Laird G.K."/>
            <person name="Lawlor S."/>
            <person name="Lee H.M."/>
            <person name="Leongamornlert D.A."/>
            <person name="Laird G."/>
            <person name="Lloyd C."/>
            <person name="Lloyd D.M."/>
            <person name="Loveland J."/>
            <person name="Lovell J."/>
            <person name="McLaren S."/>
            <person name="McLay K.E."/>
            <person name="McMurray A."/>
            <person name="Mashreghi-Mohammadi M."/>
            <person name="Matthews L."/>
            <person name="Milne S."/>
            <person name="Nickerson T."/>
            <person name="Nguyen M."/>
            <person name="Overton-Larty E."/>
            <person name="Palmer S.A."/>
            <person name="Pearce A.V."/>
            <person name="Peck A.I."/>
            <person name="Pelan S."/>
            <person name="Phillimore B."/>
            <person name="Porter K."/>
            <person name="Rice C.M."/>
            <person name="Rogosin A."/>
            <person name="Ross M.T."/>
            <person name="Sarafidou T."/>
            <person name="Sehra H.K."/>
            <person name="Shownkeen R."/>
            <person name="Skuce C.D."/>
            <person name="Smith M."/>
            <person name="Standring L."/>
            <person name="Sycamore N."/>
            <person name="Tester J."/>
            <person name="Thorpe A."/>
            <person name="Torcasso W."/>
            <person name="Tracey A."/>
            <person name="Tromans A."/>
            <person name="Tsolas J."/>
            <person name="Wall M."/>
            <person name="Walsh J."/>
            <person name="Wang H."/>
            <person name="Weinstock K."/>
            <person name="West A.P."/>
            <person name="Willey D.L."/>
            <person name="Whitehead S.L."/>
            <person name="Wilming L."/>
            <person name="Wray P.W."/>
            <person name="Young L."/>
            <person name="Chen Y."/>
            <person name="Lovering R.C."/>
            <person name="Moschonas N.K."/>
            <person name="Siebert R."/>
            <person name="Fechtel K."/>
            <person name="Bentley D."/>
            <person name="Durbin R.M."/>
            <person name="Hubbard T."/>
            <person name="Doucette-Stamm L."/>
            <person name="Beck S."/>
            <person name="Smith D.R."/>
            <person name="Rogers J."/>
        </authorList>
    </citation>
    <scope>NUCLEOTIDE SEQUENCE [LARGE SCALE GENOMIC DNA]</scope>
</reference>
<reference key="6">
    <citation type="submission" date="2005-09" db="EMBL/GenBank/DDBJ databases">
        <authorList>
            <person name="Mural R.J."/>
            <person name="Istrail S."/>
            <person name="Sutton G.G."/>
            <person name="Florea L."/>
            <person name="Halpern A.L."/>
            <person name="Mobarry C.M."/>
            <person name="Lippert R."/>
            <person name="Walenz B."/>
            <person name="Shatkay H."/>
            <person name="Dew I."/>
            <person name="Miller J.R."/>
            <person name="Flanigan M.J."/>
            <person name="Edwards N.J."/>
            <person name="Bolanos R."/>
            <person name="Fasulo D."/>
            <person name="Halldorsson B.V."/>
            <person name="Hannenhalli S."/>
            <person name="Turner R."/>
            <person name="Yooseph S."/>
            <person name="Lu F."/>
            <person name="Nusskern D.R."/>
            <person name="Shue B.C."/>
            <person name="Zheng X.H."/>
            <person name="Zhong F."/>
            <person name="Delcher A.L."/>
            <person name="Huson D.H."/>
            <person name="Kravitz S.A."/>
            <person name="Mouchard L."/>
            <person name="Reinert K."/>
            <person name="Remington K.A."/>
            <person name="Clark A.G."/>
            <person name="Waterman M.S."/>
            <person name="Eichler E.E."/>
            <person name="Adams M.D."/>
            <person name="Hunkapiller M.W."/>
            <person name="Myers E.W."/>
            <person name="Venter J.C."/>
        </authorList>
    </citation>
    <scope>NUCLEOTIDE SEQUENCE [LARGE SCALE GENOMIC DNA]</scope>
</reference>
<reference key="7">
    <citation type="journal article" date="2004" name="Genome Res.">
        <title>The status, quality, and expansion of the NIH full-length cDNA project: the Mammalian Gene Collection (MGC).</title>
        <authorList>
            <consortium name="The MGC Project Team"/>
        </authorList>
    </citation>
    <scope>NUCLEOTIDE SEQUENCE [LARGE SCALE MRNA] (ISOFORM 1)</scope>
    <source>
        <tissue>Eye</tissue>
    </source>
</reference>
<reference key="8">
    <citation type="journal article" date="2000" name="Electrophoresis">
        <title>Human ERp29: isolation, primary structural characterisation and two-dimensional gel mapping.</title>
        <authorList>
            <person name="Hubbard M.J."/>
            <person name="McHugh N.J."/>
        </authorList>
    </citation>
    <scope>PROTEIN SEQUENCE OF 12-21; 58-65; 133-139 AND 149-156</scope>
    <scope>IDENTIFICATION BY MASS SPECTROMETRY</scope>
    <source>
        <tissue>Liver</tissue>
    </source>
</reference>
<reference key="9">
    <citation type="journal article" date="2001" name="Chem. Res. Toxicol.">
        <title>Human monomethylarsonic acid (MMA(V)) reductase is a member of the glutathione-S-transferase superfamily.</title>
        <authorList>
            <person name="Zakharyan R.A."/>
            <person name="Sampayo-Reyes A."/>
            <person name="Healy S.M."/>
            <person name="Tsaprailis G."/>
            <person name="Board P.G."/>
            <person name="Liebler D.C."/>
            <person name="Aposhian H.V."/>
        </authorList>
    </citation>
    <scope>PARTIAL PROTEIN SEQUENCE</scope>
    <scope>FUNCTION</scope>
    <scope>CATALYTIC ACTIVITY</scope>
    <scope>BIOPHYSICOCHEMICAL PROPERTIES</scope>
    <scope>SUBCELLULAR LOCATION</scope>
    <scope>IDENTIFICATION BY MASS SPECTROMETRY</scope>
    <source>
        <tissue>Liver</tissue>
    </source>
</reference>
<reference key="10">
    <citation type="journal article" date="2007" name="Chem. Res. Toxicol.">
        <title>Glutathione transferase omega 1 catalyzes the reduction of S-(phenacyl)glutathiones to acetophenones.</title>
        <authorList>
            <person name="Board P.G."/>
            <person name="Anders M.W."/>
        </authorList>
    </citation>
    <scope>FUNCTION</scope>
    <scope>MUTAGENESIS OF CYS-32</scope>
    <scope>BIOPHYSICOCHEMICAL PROPERTIES</scope>
    <scope>CATALYTIC ACTIVITY</scope>
</reference>
<reference key="11">
    <citation type="journal article" date="2008" name="Anal. Biochem.">
        <title>S-(4-Nitrophenacyl)glutathione is a specific substrate for glutathione transferase omega 1-1.</title>
        <authorList>
            <person name="Board P.G."/>
            <person name="Coggan M."/>
            <person name="Cappello J."/>
            <person name="Zhou H."/>
            <person name="Oakley A.J."/>
            <person name="Anders M.W."/>
        </authorList>
    </citation>
    <scope>FUNCTION</scope>
    <scope>CATALYTIC ACTIVITY</scope>
</reference>
<reference key="12">
    <citation type="journal article" date="2009" name="Anal. Chem.">
        <title>Lys-N and trypsin cover complementary parts of the phosphoproteome in a refined SCX-based approach.</title>
        <authorList>
            <person name="Gauci S."/>
            <person name="Helbig A.O."/>
            <person name="Slijper M."/>
            <person name="Krijgsveld J."/>
            <person name="Heck A.J."/>
            <person name="Mohammed S."/>
        </authorList>
    </citation>
    <scope>ACETYLATION [LARGE SCALE ANALYSIS] AT SER-2</scope>
    <scope>CLEAVAGE OF INITIATOR METHIONINE [LARGE SCALE ANALYSIS]</scope>
    <scope>IDENTIFICATION BY MASS SPECTROMETRY [LARGE SCALE ANALYSIS]</scope>
</reference>
<reference key="13">
    <citation type="journal article" date="2009" name="Science">
        <title>Lysine acetylation targets protein complexes and co-regulates major cellular functions.</title>
        <authorList>
            <person name="Choudhary C."/>
            <person name="Kumar C."/>
            <person name="Gnad F."/>
            <person name="Nielsen M.L."/>
            <person name="Rehman M."/>
            <person name="Walther T.C."/>
            <person name="Olsen J.V."/>
            <person name="Mann M."/>
        </authorList>
    </citation>
    <scope>ACETYLATION [LARGE SCALE ANALYSIS] AT LYS-57; LYS-143; LYS-148 AND LYS-152</scope>
    <scope>IDENTIFICATION BY MASS SPECTROMETRY [LARGE SCALE ANALYSIS]</scope>
</reference>
<reference key="14">
    <citation type="journal article" date="2011" name="BMC Syst. Biol.">
        <title>Initial characterization of the human central proteome.</title>
        <authorList>
            <person name="Burkard T.R."/>
            <person name="Planyavsky M."/>
            <person name="Kaupe I."/>
            <person name="Breitwieser F.P."/>
            <person name="Buerckstuemmer T."/>
            <person name="Bennett K.L."/>
            <person name="Superti-Furga G."/>
            <person name="Colinge J."/>
        </authorList>
    </citation>
    <scope>IDENTIFICATION BY MASS SPECTROMETRY [LARGE SCALE ANALYSIS]</scope>
</reference>
<reference key="15">
    <citation type="journal article" date="2014" name="J. Proteomics">
        <title>An enzyme assisted RP-RPLC approach for in-depth analysis of human liver phosphoproteome.</title>
        <authorList>
            <person name="Bian Y."/>
            <person name="Song C."/>
            <person name="Cheng K."/>
            <person name="Dong M."/>
            <person name="Wang F."/>
            <person name="Huang J."/>
            <person name="Sun D."/>
            <person name="Wang L."/>
            <person name="Ye M."/>
            <person name="Zou H."/>
        </authorList>
    </citation>
    <scope>PHOSPHORYLATION [LARGE SCALE ANALYSIS] AT SER-129</scope>
    <scope>IDENTIFICATION BY MASS SPECTROMETRY [LARGE SCALE ANALYSIS]</scope>
    <source>
        <tissue>Liver</tissue>
    </source>
</reference>
<reference key="16">
    <citation type="journal article" date="2015" name="Proteomics">
        <title>N-terminome analysis of the human mitochondrial proteome.</title>
        <authorList>
            <person name="Vaca Jacome A.S."/>
            <person name="Rabilloud T."/>
            <person name="Schaeffer-Reiss C."/>
            <person name="Rompais M."/>
            <person name="Ayoub D."/>
            <person name="Lane L."/>
            <person name="Bairoch A."/>
            <person name="Van Dorsselaer A."/>
            <person name="Carapito C."/>
        </authorList>
    </citation>
    <scope>IDENTIFICATION BY MASS SPECTROMETRY [LARGE SCALE ANALYSIS]</scope>
</reference>
<reference key="17">
    <citation type="journal article" date="2011" name="J. Biol. Chem.">
        <title>Novel folding and stability defects cause a deficiency of human glutathione transferase omega 1.</title>
        <authorList>
            <person name="Zhou H."/>
            <person name="Brock J."/>
            <person name="Casarotto M.G."/>
            <person name="Oakley A.J."/>
            <person name="Board P.G."/>
        </authorList>
    </citation>
    <scope>X-RAY CRYSTALLOGRAPHY (2.1 ANGSTROMS) OF VARIANT GLU-155 DEL IN COMPLEX WITH GLUTATHIONE</scope>
    <scope>FUNCTION</scope>
    <scope>CATALYTIC ACTIVITY</scope>
    <scope>SUBUNIT</scope>
    <scope>CHARACTERIZATION OF VARIANTS ASP-140 AND GLU-155 DEL</scope>
</reference>
<reference key="18">
    <citation type="journal article" date="2003" name="Pharmacogenetics">
        <title>Characterization of the human Omega class glutathione transferase genes and associated polymorphisms.</title>
        <authorList>
            <person name="Whitbread A.K."/>
            <person name="Tetlow N."/>
            <person name="Eyre H.J."/>
            <person name="Sutherland G.R."/>
            <person name="Board P.G."/>
        </authorList>
    </citation>
    <scope>VARIANTS ASP-140 AND GLU-155 DEL</scope>
</reference>
<evidence type="ECO:0000269" key="1">
    <source>
    </source>
</evidence>
<evidence type="ECO:0000269" key="2">
    <source>
    </source>
</evidence>
<evidence type="ECO:0000269" key="3">
    <source>
    </source>
</evidence>
<evidence type="ECO:0000269" key="4">
    <source>
    </source>
</evidence>
<evidence type="ECO:0000269" key="5">
    <source>
    </source>
</evidence>
<evidence type="ECO:0000269" key="6">
    <source>
    </source>
</evidence>
<evidence type="ECO:0000269" key="7">
    <source>
    </source>
</evidence>
<evidence type="ECO:0000305" key="8"/>
<evidence type="ECO:0007744" key="9">
    <source>
    </source>
</evidence>
<evidence type="ECO:0007744" key="10">
    <source>
    </source>
</evidence>
<evidence type="ECO:0007744" key="11">
    <source>
    </source>
</evidence>
<evidence type="ECO:0007829" key="12">
    <source>
        <dbReference type="PDB" id="3LFL"/>
    </source>
</evidence>
<evidence type="ECO:0007829" key="13">
    <source>
        <dbReference type="PDB" id="3VLN"/>
    </source>
</evidence>
<evidence type="ECO:0007829" key="14">
    <source>
        <dbReference type="PDB" id="4IS0"/>
    </source>
</evidence>
<evidence type="ECO:0007829" key="15">
    <source>
        <dbReference type="PDB" id="5YVN"/>
    </source>
</evidence>
<name>GSTO1_HUMAN</name>
<proteinExistence type="evidence at protein level"/>
<accession>P78417</accession>
<accession>D3DRA3</accession>
<accession>F5H7H0</accession>
<accession>Q5TA03</accession>
<accession>Q7Z3T2</accession>